<sequence length="359" mass="36860">MQILADLLNTIPAINSAAMSRAQRHVDGLLKPVGSLGKLEALAIQLAGMPGLNGIPHVGKKAVLVMCADHGVWEEGVAISPKEVTAIQAENMTRGTTGVCVLAAQAGANVHVIDVGIDTAEPIPGLINMRVARGSGNIASAPAMSRRQAEKLLLDVICYTRELAKNGVTLFGVGELGMANTTPAAAIVSTITGRDPEEVVGIGANLPTDKLANKIDVVRRAITLNQPNPQDGVDVLAKVGGFDLVGIAGVMLGAASCGLPVLLDGFLSYAAALAACQMSPAIKPYLIPSHLSAEKGARIALSHLGLEPYLNMDMRLGEGSGAALAMSIIEAACAIYNNMGELAASNIVLPGNTTSDLNS</sequence>
<feature type="chain" id="PRO_1000021595" description="Nicotinate-nucleotide--dimethylbenzimidazole phosphoribosyltransferase">
    <location>
        <begin position="1"/>
        <end position="359"/>
    </location>
</feature>
<feature type="active site" description="Proton acceptor" evidence="1">
    <location>
        <position position="318"/>
    </location>
</feature>
<evidence type="ECO:0000255" key="1">
    <source>
        <dbReference type="HAMAP-Rule" id="MF_00230"/>
    </source>
</evidence>
<comment type="function">
    <text evidence="1">Catalyzes the synthesis of alpha-ribazole-5'-phosphate from nicotinate mononucleotide (NAMN) and 5,6-dimethylbenzimidazole (DMB).</text>
</comment>
<comment type="catalytic activity">
    <reaction evidence="1">
        <text>5,6-dimethylbenzimidazole + nicotinate beta-D-ribonucleotide = alpha-ribazole 5'-phosphate + nicotinate + H(+)</text>
        <dbReference type="Rhea" id="RHEA:11196"/>
        <dbReference type="ChEBI" id="CHEBI:15378"/>
        <dbReference type="ChEBI" id="CHEBI:15890"/>
        <dbReference type="ChEBI" id="CHEBI:32544"/>
        <dbReference type="ChEBI" id="CHEBI:57502"/>
        <dbReference type="ChEBI" id="CHEBI:57918"/>
        <dbReference type="EC" id="2.4.2.21"/>
    </reaction>
</comment>
<comment type="pathway">
    <text evidence="1">Nucleoside biosynthesis; alpha-ribazole biosynthesis; alpha-ribazole from 5,6-dimethylbenzimidazole: step 1/2.</text>
</comment>
<comment type="subunit">
    <text evidence="1">Homodimer.</text>
</comment>
<comment type="similarity">
    <text evidence="1">Belongs to the CobT family.</text>
</comment>
<accession>Q0TGE1</accession>
<dbReference type="EC" id="2.4.2.21" evidence="1"/>
<dbReference type="EMBL" id="CP000247">
    <property type="protein sequence ID" value="ABG69988.1"/>
    <property type="molecule type" value="Genomic_DNA"/>
</dbReference>
<dbReference type="RefSeq" id="WP_001166163.1">
    <property type="nucleotide sequence ID" value="NC_008253.1"/>
</dbReference>
<dbReference type="SMR" id="Q0TGE1"/>
<dbReference type="GeneID" id="86946915"/>
<dbReference type="KEGG" id="ecp:ECP_1989"/>
<dbReference type="HOGENOM" id="CLU_002982_0_0_6"/>
<dbReference type="UniPathway" id="UPA00061">
    <property type="reaction ID" value="UER00516"/>
</dbReference>
<dbReference type="Proteomes" id="UP000009182">
    <property type="component" value="Chromosome"/>
</dbReference>
<dbReference type="GO" id="GO:0008939">
    <property type="term" value="F:nicotinate-nucleotide-dimethylbenzimidazole phosphoribosyltransferase activity"/>
    <property type="evidence" value="ECO:0007669"/>
    <property type="project" value="UniProtKB-UniRule"/>
</dbReference>
<dbReference type="GO" id="GO:0009236">
    <property type="term" value="P:cobalamin biosynthetic process"/>
    <property type="evidence" value="ECO:0007669"/>
    <property type="project" value="UniProtKB-KW"/>
</dbReference>
<dbReference type="CDD" id="cd02439">
    <property type="entry name" value="DMB-PRT_CobT"/>
    <property type="match status" value="1"/>
</dbReference>
<dbReference type="FunFam" id="3.40.50.10210:FF:000001">
    <property type="entry name" value="Nicotinate-nucleotide--dimethylbenzimidazole phosphoribosyltransferase"/>
    <property type="match status" value="1"/>
</dbReference>
<dbReference type="Gene3D" id="1.10.1610.10">
    <property type="match status" value="2"/>
</dbReference>
<dbReference type="Gene3D" id="3.40.50.10210">
    <property type="match status" value="1"/>
</dbReference>
<dbReference type="HAMAP" id="MF_00230">
    <property type="entry name" value="CobT"/>
    <property type="match status" value="1"/>
</dbReference>
<dbReference type="InterPro" id="IPR003200">
    <property type="entry name" value="Nict_dMeBzImd_PRibTrfase"/>
</dbReference>
<dbReference type="InterPro" id="IPR017846">
    <property type="entry name" value="Nict_dMeBzImd_PRibTrfase_bact"/>
</dbReference>
<dbReference type="InterPro" id="IPR023195">
    <property type="entry name" value="Nict_dMeBzImd_PRibTrfase_N"/>
</dbReference>
<dbReference type="InterPro" id="IPR036087">
    <property type="entry name" value="Nict_dMeBzImd_PRibTrfase_sf"/>
</dbReference>
<dbReference type="NCBIfam" id="TIGR03160">
    <property type="entry name" value="cobT_DBIPRT"/>
    <property type="match status" value="1"/>
</dbReference>
<dbReference type="NCBIfam" id="NF000996">
    <property type="entry name" value="PRK00105.1"/>
    <property type="match status" value="1"/>
</dbReference>
<dbReference type="PANTHER" id="PTHR43463">
    <property type="entry name" value="NICOTINATE-NUCLEOTIDE--DIMETHYLBENZIMIDAZOLE PHOSPHORIBOSYLTRANSFERASE"/>
    <property type="match status" value="1"/>
</dbReference>
<dbReference type="PANTHER" id="PTHR43463:SF1">
    <property type="entry name" value="NICOTINATE-NUCLEOTIDE--DIMETHYLBENZIMIDAZOLE PHOSPHORIBOSYLTRANSFERASE"/>
    <property type="match status" value="1"/>
</dbReference>
<dbReference type="Pfam" id="PF02277">
    <property type="entry name" value="DBI_PRT"/>
    <property type="match status" value="1"/>
</dbReference>
<dbReference type="SUPFAM" id="SSF52733">
    <property type="entry name" value="Nicotinate mononucleotide:5,6-dimethylbenzimidazole phosphoribosyltransferase (CobT)"/>
    <property type="match status" value="1"/>
</dbReference>
<keyword id="KW-0169">Cobalamin biosynthesis</keyword>
<keyword id="KW-0328">Glycosyltransferase</keyword>
<keyword id="KW-0808">Transferase</keyword>
<gene>
    <name evidence="1" type="primary">cobT</name>
    <name type="ordered locus">ECP_1989</name>
</gene>
<protein>
    <recommendedName>
        <fullName evidence="1">Nicotinate-nucleotide--dimethylbenzimidazole phosphoribosyltransferase</fullName>
        <shortName evidence="1">NN:DBI PRT</shortName>
        <ecNumber evidence="1">2.4.2.21</ecNumber>
    </recommendedName>
    <alternativeName>
        <fullName evidence="1">N(1)-alpha-phosphoribosyltransferase</fullName>
    </alternativeName>
</protein>
<organism>
    <name type="scientific">Escherichia coli O6:K15:H31 (strain 536 / UPEC)</name>
    <dbReference type="NCBI Taxonomy" id="362663"/>
    <lineage>
        <taxon>Bacteria</taxon>
        <taxon>Pseudomonadati</taxon>
        <taxon>Pseudomonadota</taxon>
        <taxon>Gammaproteobacteria</taxon>
        <taxon>Enterobacterales</taxon>
        <taxon>Enterobacteriaceae</taxon>
        <taxon>Escherichia</taxon>
    </lineage>
</organism>
<proteinExistence type="inferred from homology"/>
<name>COBT_ECOL5</name>
<reference key="1">
    <citation type="journal article" date="2006" name="Mol. Microbiol.">
        <title>Role of pathogenicity island-associated integrases in the genome plasticity of uropathogenic Escherichia coli strain 536.</title>
        <authorList>
            <person name="Hochhut B."/>
            <person name="Wilde C."/>
            <person name="Balling G."/>
            <person name="Middendorf B."/>
            <person name="Dobrindt U."/>
            <person name="Brzuszkiewicz E."/>
            <person name="Gottschalk G."/>
            <person name="Carniel E."/>
            <person name="Hacker J."/>
        </authorList>
    </citation>
    <scope>NUCLEOTIDE SEQUENCE [LARGE SCALE GENOMIC DNA]</scope>
    <source>
        <strain>536 / UPEC</strain>
    </source>
</reference>